<comment type="function">
    <text evidence="1">Required for accurate and efficient protein synthesis under certain stress conditions. May act as a fidelity factor of the translation reaction, by catalyzing a one-codon backward translocation of tRNAs on improperly translocated ribosomes. Back-translocation proceeds from a post-translocation (POST) complex to a pre-translocation (PRE) complex, thus giving elongation factor G a second chance to translocate the tRNAs correctly. Binds to ribosomes in a GTP-dependent manner.</text>
</comment>
<comment type="catalytic activity">
    <reaction evidence="1">
        <text>GTP + H2O = GDP + phosphate + H(+)</text>
        <dbReference type="Rhea" id="RHEA:19669"/>
        <dbReference type="ChEBI" id="CHEBI:15377"/>
        <dbReference type="ChEBI" id="CHEBI:15378"/>
        <dbReference type="ChEBI" id="CHEBI:37565"/>
        <dbReference type="ChEBI" id="CHEBI:43474"/>
        <dbReference type="ChEBI" id="CHEBI:58189"/>
        <dbReference type="EC" id="3.6.5.n1"/>
    </reaction>
</comment>
<comment type="subcellular location">
    <subcellularLocation>
        <location evidence="1">Cell inner membrane</location>
        <topology evidence="1">Peripheral membrane protein</topology>
        <orientation evidence="1">Cytoplasmic side</orientation>
    </subcellularLocation>
</comment>
<comment type="similarity">
    <text evidence="1">Belongs to the TRAFAC class translation factor GTPase superfamily. Classic translation factor GTPase family. LepA subfamily.</text>
</comment>
<dbReference type="EC" id="3.6.5.n1" evidence="1"/>
<dbReference type="EMBL" id="CP000388">
    <property type="protein sequence ID" value="ABG41657.1"/>
    <property type="molecule type" value="Genomic_DNA"/>
</dbReference>
<dbReference type="RefSeq" id="WP_011575892.1">
    <property type="nucleotide sequence ID" value="NC_008228.1"/>
</dbReference>
<dbReference type="SMR" id="Q15R31"/>
<dbReference type="STRING" id="342610.Patl_3151"/>
<dbReference type="KEGG" id="pat:Patl_3151"/>
<dbReference type="eggNOG" id="COG0481">
    <property type="taxonomic scope" value="Bacteria"/>
</dbReference>
<dbReference type="HOGENOM" id="CLU_009995_3_3_6"/>
<dbReference type="OrthoDB" id="9804431at2"/>
<dbReference type="Proteomes" id="UP000001981">
    <property type="component" value="Chromosome"/>
</dbReference>
<dbReference type="GO" id="GO:0005886">
    <property type="term" value="C:plasma membrane"/>
    <property type="evidence" value="ECO:0007669"/>
    <property type="project" value="UniProtKB-SubCell"/>
</dbReference>
<dbReference type="GO" id="GO:0005525">
    <property type="term" value="F:GTP binding"/>
    <property type="evidence" value="ECO:0007669"/>
    <property type="project" value="UniProtKB-UniRule"/>
</dbReference>
<dbReference type="GO" id="GO:0003924">
    <property type="term" value="F:GTPase activity"/>
    <property type="evidence" value="ECO:0007669"/>
    <property type="project" value="UniProtKB-UniRule"/>
</dbReference>
<dbReference type="GO" id="GO:0097216">
    <property type="term" value="F:guanosine tetraphosphate binding"/>
    <property type="evidence" value="ECO:0007669"/>
    <property type="project" value="UniProtKB-ARBA"/>
</dbReference>
<dbReference type="GO" id="GO:0043022">
    <property type="term" value="F:ribosome binding"/>
    <property type="evidence" value="ECO:0007669"/>
    <property type="project" value="UniProtKB-UniRule"/>
</dbReference>
<dbReference type="GO" id="GO:0003746">
    <property type="term" value="F:translation elongation factor activity"/>
    <property type="evidence" value="ECO:0007669"/>
    <property type="project" value="UniProtKB-UniRule"/>
</dbReference>
<dbReference type="GO" id="GO:0045727">
    <property type="term" value="P:positive regulation of translation"/>
    <property type="evidence" value="ECO:0007669"/>
    <property type="project" value="UniProtKB-UniRule"/>
</dbReference>
<dbReference type="CDD" id="cd03699">
    <property type="entry name" value="EF4_II"/>
    <property type="match status" value="1"/>
</dbReference>
<dbReference type="CDD" id="cd16260">
    <property type="entry name" value="EF4_III"/>
    <property type="match status" value="1"/>
</dbReference>
<dbReference type="CDD" id="cd01890">
    <property type="entry name" value="LepA"/>
    <property type="match status" value="1"/>
</dbReference>
<dbReference type="CDD" id="cd03709">
    <property type="entry name" value="lepA_C"/>
    <property type="match status" value="1"/>
</dbReference>
<dbReference type="FunFam" id="3.40.50.300:FF:000078">
    <property type="entry name" value="Elongation factor 4"/>
    <property type="match status" value="1"/>
</dbReference>
<dbReference type="FunFam" id="2.40.30.10:FF:000015">
    <property type="entry name" value="Translation factor GUF1, mitochondrial"/>
    <property type="match status" value="1"/>
</dbReference>
<dbReference type="FunFam" id="3.30.70.240:FF:000007">
    <property type="entry name" value="Translation factor GUF1, mitochondrial"/>
    <property type="match status" value="1"/>
</dbReference>
<dbReference type="FunFam" id="3.30.70.2570:FF:000001">
    <property type="entry name" value="Translation factor GUF1, mitochondrial"/>
    <property type="match status" value="1"/>
</dbReference>
<dbReference type="FunFam" id="3.30.70.870:FF:000004">
    <property type="entry name" value="Translation factor GUF1, mitochondrial"/>
    <property type="match status" value="1"/>
</dbReference>
<dbReference type="Gene3D" id="3.30.70.240">
    <property type="match status" value="1"/>
</dbReference>
<dbReference type="Gene3D" id="3.30.70.2570">
    <property type="entry name" value="Elongation factor 4, C-terminal domain"/>
    <property type="match status" value="1"/>
</dbReference>
<dbReference type="Gene3D" id="3.30.70.870">
    <property type="entry name" value="Elongation Factor G (Translational Gtpase), domain 3"/>
    <property type="match status" value="1"/>
</dbReference>
<dbReference type="Gene3D" id="3.40.50.300">
    <property type="entry name" value="P-loop containing nucleotide triphosphate hydrolases"/>
    <property type="match status" value="1"/>
</dbReference>
<dbReference type="Gene3D" id="2.40.30.10">
    <property type="entry name" value="Translation factors"/>
    <property type="match status" value="1"/>
</dbReference>
<dbReference type="HAMAP" id="MF_00071">
    <property type="entry name" value="LepA"/>
    <property type="match status" value="1"/>
</dbReference>
<dbReference type="InterPro" id="IPR006297">
    <property type="entry name" value="EF-4"/>
</dbReference>
<dbReference type="InterPro" id="IPR035647">
    <property type="entry name" value="EFG_III/V"/>
</dbReference>
<dbReference type="InterPro" id="IPR000640">
    <property type="entry name" value="EFG_V-like"/>
</dbReference>
<dbReference type="InterPro" id="IPR004161">
    <property type="entry name" value="EFTu-like_2"/>
</dbReference>
<dbReference type="InterPro" id="IPR031157">
    <property type="entry name" value="G_TR_CS"/>
</dbReference>
<dbReference type="InterPro" id="IPR038363">
    <property type="entry name" value="LepA_C_sf"/>
</dbReference>
<dbReference type="InterPro" id="IPR013842">
    <property type="entry name" value="LepA_CTD"/>
</dbReference>
<dbReference type="InterPro" id="IPR035654">
    <property type="entry name" value="LepA_IV"/>
</dbReference>
<dbReference type="InterPro" id="IPR027417">
    <property type="entry name" value="P-loop_NTPase"/>
</dbReference>
<dbReference type="InterPro" id="IPR005225">
    <property type="entry name" value="Small_GTP-bd"/>
</dbReference>
<dbReference type="InterPro" id="IPR000795">
    <property type="entry name" value="T_Tr_GTP-bd_dom"/>
</dbReference>
<dbReference type="InterPro" id="IPR009000">
    <property type="entry name" value="Transl_B-barrel_sf"/>
</dbReference>
<dbReference type="NCBIfam" id="TIGR01393">
    <property type="entry name" value="lepA"/>
    <property type="match status" value="1"/>
</dbReference>
<dbReference type="NCBIfam" id="TIGR00231">
    <property type="entry name" value="small_GTP"/>
    <property type="match status" value="1"/>
</dbReference>
<dbReference type="PANTHER" id="PTHR43512:SF4">
    <property type="entry name" value="TRANSLATION FACTOR GUF1 HOMOLOG, CHLOROPLASTIC"/>
    <property type="match status" value="1"/>
</dbReference>
<dbReference type="PANTHER" id="PTHR43512">
    <property type="entry name" value="TRANSLATION FACTOR GUF1-RELATED"/>
    <property type="match status" value="1"/>
</dbReference>
<dbReference type="Pfam" id="PF00679">
    <property type="entry name" value="EFG_C"/>
    <property type="match status" value="1"/>
</dbReference>
<dbReference type="Pfam" id="PF00009">
    <property type="entry name" value="GTP_EFTU"/>
    <property type="match status" value="1"/>
</dbReference>
<dbReference type="Pfam" id="PF03144">
    <property type="entry name" value="GTP_EFTU_D2"/>
    <property type="match status" value="1"/>
</dbReference>
<dbReference type="Pfam" id="PF06421">
    <property type="entry name" value="LepA_C"/>
    <property type="match status" value="1"/>
</dbReference>
<dbReference type="PRINTS" id="PR00315">
    <property type="entry name" value="ELONGATNFCT"/>
</dbReference>
<dbReference type="SMART" id="SM00838">
    <property type="entry name" value="EFG_C"/>
    <property type="match status" value="1"/>
</dbReference>
<dbReference type="SUPFAM" id="SSF54980">
    <property type="entry name" value="EF-G C-terminal domain-like"/>
    <property type="match status" value="2"/>
</dbReference>
<dbReference type="SUPFAM" id="SSF52540">
    <property type="entry name" value="P-loop containing nucleoside triphosphate hydrolases"/>
    <property type="match status" value="1"/>
</dbReference>
<dbReference type="SUPFAM" id="SSF50447">
    <property type="entry name" value="Translation proteins"/>
    <property type="match status" value="1"/>
</dbReference>
<dbReference type="PROSITE" id="PS00301">
    <property type="entry name" value="G_TR_1"/>
    <property type="match status" value="1"/>
</dbReference>
<dbReference type="PROSITE" id="PS51722">
    <property type="entry name" value="G_TR_2"/>
    <property type="match status" value="1"/>
</dbReference>
<feature type="chain" id="PRO_0000265686" description="Elongation factor 4">
    <location>
        <begin position="1"/>
        <end position="598"/>
    </location>
</feature>
<feature type="domain" description="tr-type G">
    <location>
        <begin position="4"/>
        <end position="186"/>
    </location>
</feature>
<feature type="binding site" evidence="1">
    <location>
        <begin position="16"/>
        <end position="21"/>
    </location>
    <ligand>
        <name>GTP</name>
        <dbReference type="ChEBI" id="CHEBI:37565"/>
    </ligand>
</feature>
<feature type="binding site" evidence="1">
    <location>
        <begin position="133"/>
        <end position="136"/>
    </location>
    <ligand>
        <name>GTP</name>
        <dbReference type="ChEBI" id="CHEBI:37565"/>
    </ligand>
</feature>
<proteinExistence type="inferred from homology"/>
<gene>
    <name evidence="1" type="primary">lepA</name>
    <name type="ordered locus">Patl_3151</name>
</gene>
<accession>Q15R31</accession>
<protein>
    <recommendedName>
        <fullName evidence="1">Elongation factor 4</fullName>
        <shortName evidence="1">EF-4</shortName>
        <ecNumber evidence="1">3.6.5.n1</ecNumber>
    </recommendedName>
    <alternativeName>
        <fullName evidence="1">Ribosomal back-translocase LepA</fullName>
    </alternativeName>
</protein>
<organism>
    <name type="scientific">Pseudoalteromonas atlantica (strain T6c / ATCC BAA-1087)</name>
    <dbReference type="NCBI Taxonomy" id="3042615"/>
    <lineage>
        <taxon>Bacteria</taxon>
        <taxon>Pseudomonadati</taxon>
        <taxon>Pseudomonadota</taxon>
        <taxon>Gammaproteobacteria</taxon>
        <taxon>Alteromonadales</taxon>
        <taxon>Alteromonadaceae</taxon>
        <taxon>Paraglaciecola</taxon>
    </lineage>
</organism>
<name>LEPA_PSEA6</name>
<evidence type="ECO:0000255" key="1">
    <source>
        <dbReference type="HAMAP-Rule" id="MF_00071"/>
    </source>
</evidence>
<sequence length="598" mass="66028">MQHKHIRNFSIIAHIDHGKSTLSDRLIQHCGGLSEREMSAQVLDSMDIERERGITIKAQSVTLNYKARDGETYQLNFIDTPGHVDFSYEVSRSLAACEGALLVVDAGQGVEAQTLANCYTAIDLNMEVVPILNKIDLPQAEPDRVAEEIEDIVGIDAIDAVRCSAKTGIGIEDVLEVIVRQIPPPEGDIDAPLKALIVDSWFDNYQGVVSLVRIVQGELRKNDKIKIMSTGVVHQADKVGIFTPKATDTGILRAGEVGFIVAGIKEIHGAPVGDTITLARAPADAALPGFKKVKPQVYAGLFPISSDDYEDFRDALAKLSLNDASLFFEPESSSALGFGFRIGFLGMLHMEIIQERLEREYDLDLITTAPTVVYEVVTTDGETLYVDNPSKLPPVNSIDEIHEPIVEAHILVPQEYLGSVITLCVDKRGVQTSMTYHGKQVAVTYELPMAEVVMDFFDKLKSTSRGFASLDYNFKHFQTAEMSRLDILINGERVDALAMITHKDNAQSRGRDLVEKLRELIPRQMFDIAIQAAIGNQIVARSTIKQLRKNVIAKCYGGDVSRKKKLLQKQKDGKKRMKSVGNVELPQEAFLALLKVGK</sequence>
<keyword id="KW-0997">Cell inner membrane</keyword>
<keyword id="KW-1003">Cell membrane</keyword>
<keyword id="KW-0342">GTP-binding</keyword>
<keyword id="KW-0378">Hydrolase</keyword>
<keyword id="KW-0472">Membrane</keyword>
<keyword id="KW-0547">Nucleotide-binding</keyword>
<keyword id="KW-0648">Protein biosynthesis</keyword>
<reference key="1">
    <citation type="submission" date="2006-06" db="EMBL/GenBank/DDBJ databases">
        <title>Complete sequence of Pseudoalteromonas atlantica T6c.</title>
        <authorList>
            <consortium name="US DOE Joint Genome Institute"/>
            <person name="Copeland A."/>
            <person name="Lucas S."/>
            <person name="Lapidus A."/>
            <person name="Barry K."/>
            <person name="Detter J.C."/>
            <person name="Glavina del Rio T."/>
            <person name="Hammon N."/>
            <person name="Israni S."/>
            <person name="Dalin E."/>
            <person name="Tice H."/>
            <person name="Pitluck S."/>
            <person name="Saunders E."/>
            <person name="Brettin T."/>
            <person name="Bruce D."/>
            <person name="Han C."/>
            <person name="Tapia R."/>
            <person name="Gilna P."/>
            <person name="Schmutz J."/>
            <person name="Larimer F."/>
            <person name="Land M."/>
            <person name="Hauser L."/>
            <person name="Kyrpides N."/>
            <person name="Kim E."/>
            <person name="Karls A.C."/>
            <person name="Bartlett D."/>
            <person name="Higgins B.P."/>
            <person name="Richardson P."/>
        </authorList>
    </citation>
    <scope>NUCLEOTIDE SEQUENCE [LARGE SCALE GENOMIC DNA]</scope>
    <source>
        <strain>T6c / ATCC BAA-1087</strain>
    </source>
</reference>